<protein>
    <recommendedName>
        <fullName>Endogenous retrovirus group FC1 member 1 Env polyprotein</fullName>
    </recommendedName>
    <alternativeName>
        <fullName>Envelope polyprotein</fullName>
    </alternativeName>
    <alternativeName>
        <fullName>Fc2deltaenv</fullName>
    </alternativeName>
    <alternativeName>
        <fullName>HERV-F(c)2_7q36.2 provirus ancestral Env polyprotein</fullName>
    </alternativeName>
    <domain>
        <recommendedName>
            <fullName>Surface protein</fullName>
            <shortName>SU</shortName>
        </recommendedName>
    </domain>
    <domain>
        <recommendedName>
            <fullName>Truncated transmembrane protein</fullName>
            <shortName>TM</shortName>
        </recommendedName>
    </domain>
</protein>
<evidence type="ECO:0000250" key="1"/>
<evidence type="ECO:0000255" key="2"/>
<evidence type="ECO:0000269" key="3">
    <source>
    </source>
</evidence>
<evidence type="ECO:0000269" key="4">
    <source>
    </source>
</evidence>
<evidence type="ECO:0000305" key="5"/>
<accession>P60608</accession>
<sequence>MNSPCDRLQQFIQVLLEESWSFPSFANTLHWPENLLSYIDELVWQGSLQNFHQHEVRFDKPPLRLPLTGFSSLTENWSSRQAVSSRLVATAASPPAGCQAPIAFLGLKFSSLGPARKNPALCFLYDQSNSKCNTSWVKENVGCPWHWCNIHEALIRTEKGSDPMFYVNTSTGGRDGFNGFNLQISDPWDPRWASGVDGGLYEHKTFMYPVAKIRIARTLKTTVTGLSDLASSIQSAEKELTSQLQPAADQAKSSRFSWLTLISEGAQLLQSTGVQNLSHCFLCAALRRPPLVAVPLPTPFNYTINSSTPIPPVPKGQVPLFSDPIRHKFPFCYSTPNASWCNQTRMLTSTPAPPRGYFWCNSTLTKVLNSTGNHTLCLPISLIPGLTLYSQDELSHLLAWTEPRPQNKSKWAIFLPLVLGISLASSLVASGLGKGALTHSIQTSQDLSTHLQLAIEASAESLDSLQRQITTVAQVAAQNRQALDLLMAEKGRTCLFLQEECCYYLNESGVVENSLQTLKKKKSSKRS</sequence>
<organism>
    <name type="scientific">Homo sapiens</name>
    <name type="common">Human</name>
    <dbReference type="NCBI Taxonomy" id="9606"/>
    <lineage>
        <taxon>Eukaryota</taxon>
        <taxon>Metazoa</taxon>
        <taxon>Chordata</taxon>
        <taxon>Craniata</taxon>
        <taxon>Vertebrata</taxon>
        <taxon>Euteleostomi</taxon>
        <taxon>Mammalia</taxon>
        <taxon>Eutheria</taxon>
        <taxon>Euarchontoglires</taxon>
        <taxon>Primates</taxon>
        <taxon>Haplorrhini</taxon>
        <taxon>Catarrhini</taxon>
        <taxon>Hominidae</taxon>
        <taxon>Homo</taxon>
    </lineage>
</organism>
<feature type="chain" id="PRO_0000008437" description="Endogenous retrovirus group FC1 member 1 Env polyprotein">
    <location>
        <begin position="1"/>
        <end position="527"/>
    </location>
</feature>
<feature type="region of interest" description="Surface protein" evidence="1">
    <location>
        <begin position="1"/>
        <end position="411"/>
    </location>
</feature>
<feature type="region of interest" description="Transmembrane protein" evidence="1">
    <location>
        <begin position="412"/>
        <end position="527"/>
    </location>
</feature>
<feature type="region of interest" description="Fusion peptide" evidence="2">
    <location>
        <begin position="412"/>
        <end position="432"/>
    </location>
</feature>
<feature type="short sequence motif" description="CXXC" evidence="1">
    <location>
        <begin position="280"/>
        <end position="283"/>
    </location>
</feature>
<feature type="short sequence motif" description="CKS-17" evidence="1">
    <location>
        <begin position="477"/>
        <end position="493"/>
    </location>
</feature>
<feature type="short sequence motif" description="CX6CC" evidence="1">
    <location>
        <begin position="494"/>
        <end position="502"/>
    </location>
</feature>
<feature type="site" description="Ancestral cleavage site" evidence="2">
    <location>
        <begin position="411"/>
        <end position="412"/>
    </location>
</feature>
<feature type="disulfide bond" evidence="1">
    <location>
        <begin position="494"/>
        <end position="501"/>
    </location>
</feature>
<reference key="1">
    <citation type="submission" date="1999-11" db="EMBL/GenBank/DDBJ databases">
        <authorList>
            <person name="Birren B."/>
            <person name="Linton L."/>
            <person name="Nusbaum C."/>
            <person name="Lander E."/>
        </authorList>
    </citation>
    <scope>NUCLEOTIDE SEQUENCE [GENOMIC DNA]</scope>
</reference>
<reference key="2">
    <citation type="journal article" date="2003" name="Nature">
        <title>The DNA sequence of human chromosome 7.</title>
        <authorList>
            <person name="Hillier L.W."/>
            <person name="Fulton R.S."/>
            <person name="Fulton L.A."/>
            <person name="Graves T.A."/>
            <person name="Pepin K.H."/>
            <person name="Wagner-McPherson C."/>
            <person name="Layman D."/>
            <person name="Maas J."/>
            <person name="Jaeger S."/>
            <person name="Walker R."/>
            <person name="Wylie K."/>
            <person name="Sekhon M."/>
            <person name="Becker M.C."/>
            <person name="O'Laughlin M.D."/>
            <person name="Schaller M.E."/>
            <person name="Fewell G.A."/>
            <person name="Delehaunty K.D."/>
            <person name="Miner T.L."/>
            <person name="Nash W.E."/>
            <person name="Cordes M."/>
            <person name="Du H."/>
            <person name="Sun H."/>
            <person name="Edwards J."/>
            <person name="Bradshaw-Cordum H."/>
            <person name="Ali J."/>
            <person name="Andrews S."/>
            <person name="Isak A."/>
            <person name="Vanbrunt A."/>
            <person name="Nguyen C."/>
            <person name="Du F."/>
            <person name="Lamar B."/>
            <person name="Courtney L."/>
            <person name="Kalicki J."/>
            <person name="Ozersky P."/>
            <person name="Bielicki L."/>
            <person name="Scott K."/>
            <person name="Holmes A."/>
            <person name="Harkins R."/>
            <person name="Harris A."/>
            <person name="Strong C.M."/>
            <person name="Hou S."/>
            <person name="Tomlinson C."/>
            <person name="Dauphin-Kohlberg S."/>
            <person name="Kozlowicz-Reilly A."/>
            <person name="Leonard S."/>
            <person name="Rohlfing T."/>
            <person name="Rock S.M."/>
            <person name="Tin-Wollam A.-M."/>
            <person name="Abbott A."/>
            <person name="Minx P."/>
            <person name="Maupin R."/>
            <person name="Strowmatt C."/>
            <person name="Latreille P."/>
            <person name="Miller N."/>
            <person name="Johnson D."/>
            <person name="Murray J."/>
            <person name="Woessner J.P."/>
            <person name="Wendl M.C."/>
            <person name="Yang S.-P."/>
            <person name="Schultz B.R."/>
            <person name="Wallis J.W."/>
            <person name="Spieth J."/>
            <person name="Bieri T.A."/>
            <person name="Nelson J.O."/>
            <person name="Berkowicz N."/>
            <person name="Wohldmann P.E."/>
            <person name="Cook L.L."/>
            <person name="Hickenbotham M.T."/>
            <person name="Eldred J."/>
            <person name="Williams D."/>
            <person name="Bedell J.A."/>
            <person name="Mardis E.R."/>
            <person name="Clifton S.W."/>
            <person name="Chissoe S.L."/>
            <person name="Marra M.A."/>
            <person name="Raymond C."/>
            <person name="Haugen E."/>
            <person name="Gillett W."/>
            <person name="Zhou Y."/>
            <person name="James R."/>
            <person name="Phelps K."/>
            <person name="Iadanoto S."/>
            <person name="Bubb K."/>
            <person name="Simms E."/>
            <person name="Levy R."/>
            <person name="Clendenning J."/>
            <person name="Kaul R."/>
            <person name="Kent W.J."/>
            <person name="Furey T.S."/>
            <person name="Baertsch R.A."/>
            <person name="Brent M.R."/>
            <person name="Keibler E."/>
            <person name="Flicek P."/>
            <person name="Bork P."/>
            <person name="Suyama M."/>
            <person name="Bailey J.A."/>
            <person name="Portnoy M.E."/>
            <person name="Torrents D."/>
            <person name="Chinwalla A.T."/>
            <person name="Gish W.R."/>
            <person name="Eddy S.R."/>
            <person name="McPherson J.D."/>
            <person name="Olson M.V."/>
            <person name="Eichler E.E."/>
            <person name="Green E.D."/>
            <person name="Waterston R.H."/>
            <person name="Wilson R.K."/>
        </authorList>
    </citation>
    <scope>NUCLEOTIDE SEQUENCE [LARGE SCALE GENOMIC DNA]</scope>
</reference>
<reference key="3">
    <citation type="journal article" date="2001" name="J. Virol.">
        <title>Identification, phylogeny, and evolution of retroviral elements based on their envelope genes.</title>
        <authorList>
            <person name="Benit L."/>
            <person name="Dessen P."/>
            <person name="Heidmann T."/>
        </authorList>
    </citation>
    <scope>CHARACTERIZATION</scope>
</reference>
<reference key="4">
    <citation type="journal article" date="2003" name="Virology">
        <title>Characterization of the low-copy HERV-Fc family: evidence for recent integrations in primates of elements with coding envelope genes.</title>
        <authorList>
            <person name="Benit L."/>
            <person name="Calteau A."/>
            <person name="Heidmann T."/>
        </authorList>
    </citation>
    <scope>CHARACTERIZATION</scope>
</reference>
<reference key="5">
    <citation type="journal article" date="2003" name="Proc. Natl. Acad. Sci. U.S.A.">
        <title>Genomewide screening for fusogenic human endogenous retrovirus envelopes identifies syncytin 2, a gene conserved on primate evolution.</title>
        <authorList>
            <person name="Blaise S."/>
            <person name="de Parseval N."/>
            <person name="Benit L."/>
            <person name="Heidmann T."/>
        </authorList>
    </citation>
    <scope>FUNCTION</scope>
</reference>
<reference key="6">
    <citation type="journal article" date="2003" name="J. Virol.">
        <title>Survey of human genes of retroviral origin: identification and transcriptome of the genes with coding capacity for complete envelope proteins.</title>
        <authorList>
            <person name="de Parseval N."/>
            <person name="Lazar V."/>
            <person name="Casella J.-F."/>
            <person name="Benit L."/>
            <person name="Heidmann T."/>
        </authorList>
    </citation>
    <scope>TISSUE SPECIFICITY</scope>
</reference>
<comment type="function">
    <text evidence="4">Retroviral envelope proteins mediate receptor recognition and membrane fusion during early infection. Endogenous envelope proteins may have kept, lost or modified their original function during evolution. This endogenous envelope protein has lost its original fusogenic properties.</text>
</comment>
<comment type="subcellular location">
    <subcellularLocation>
        <location>Virion</location>
    </subcellularLocation>
</comment>
<comment type="alternative products">
    <event type="ribosomal frameshifting"/>
    <isoform>
        <id>P60608-1</id>
        <name>1</name>
        <sequence type="displayed"/>
    </isoform>
    <text>A ribosomal frameshift due to a slippery site present at the end of the gene may lead to a longer protein.</text>
</comment>
<comment type="tissue specificity">
    <text evidence="3">Low expression in skin and testis.</text>
</comment>
<comment type="domain">
    <text evidence="1">The CKS-17 immunosuppressive domain is present in many retroviral envelope proteins. As a synthetic peptide, it inhibits immune function in vitro and in vivo (By similarity).</text>
</comment>
<comment type="PTM">
    <text evidence="1">The CXXC motif is highly conserved across a broad range of retroviral envelope proteins. It is thought to participate in the formation of a labile disulfide bond possibly with the CX6CC motif present in the transmembrane domain (By similarity).</text>
</comment>
<comment type="miscellaneous">
    <text>Orthologs in P.troglodytes (truncated), G.gorilla (truncated).</text>
</comment>
<comment type="similarity">
    <text evidence="5">Belongs to the gamma type-C retroviral envelope protein family. HERV class-I F(c)2 env subfamily.</text>
</comment>
<comment type="caution">
    <text evidence="5">The cleavage site does not match the consensus.</text>
</comment>
<comment type="caution">
    <text evidence="5">CKS-17 sequence does not match the minimal active consensus.</text>
</comment>
<comment type="caution">
    <text evidence="5">No predictable signal peptide.</text>
</comment>
<comment type="caution">
    <text evidence="5">Truncated; premature stop codon upstream of the potential transmembrane domain.</text>
</comment>
<keyword id="KW-1015">Disulfide bond</keyword>
<keyword id="KW-0895">ERV</keyword>
<keyword id="KW-1185">Reference proteome</keyword>
<keyword id="KW-0688">Ribosomal frameshifting</keyword>
<keyword id="KW-0814">Transposable element</keyword>
<keyword id="KW-0261">Viral envelope protein</keyword>
<keyword id="KW-0946">Virion</keyword>
<proteinExistence type="evidence at protein level"/>
<gene>
    <name type="primary">ERVFC1-1</name>
</gene>
<name>EFC2_HUMAN</name>
<dbReference type="EMBL" id="AC016222">
    <property type="status" value="NOT_ANNOTATED_CDS"/>
    <property type="molecule type" value="Genomic_DNA"/>
</dbReference>
<dbReference type="EMBL" id="AC073236">
    <property type="status" value="NOT_ANNOTATED_CDS"/>
    <property type="molecule type" value="Genomic_DNA"/>
</dbReference>
<dbReference type="SMR" id="P60608"/>
<dbReference type="GlyGen" id="P60608">
    <property type="glycosylation" value="1 site"/>
</dbReference>
<dbReference type="iPTMnet" id="P60608"/>
<dbReference type="PhosphoSitePlus" id="P60608"/>
<dbReference type="BioMuta" id="HGNC:38137"/>
<dbReference type="DMDM" id="45476806"/>
<dbReference type="PeptideAtlas" id="P60608"/>
<dbReference type="GeneCards" id="ERVFC1-1"/>
<dbReference type="HGNC" id="HGNC:38137">
    <property type="gene designation" value="ERVFC1-1"/>
</dbReference>
<dbReference type="neXtProt" id="NX_P60608"/>
<dbReference type="InParanoid" id="P60608"/>
<dbReference type="PAN-GO" id="P60608">
    <property type="GO annotations" value="0 GO annotations based on evolutionary models"/>
</dbReference>
<dbReference type="PhylomeDB" id="P60608"/>
<dbReference type="PathwayCommons" id="P60608"/>
<dbReference type="Pharos" id="P60608">
    <property type="development level" value="Tdark"/>
</dbReference>
<dbReference type="PRO" id="PR:P60608"/>
<dbReference type="Proteomes" id="UP000005640">
    <property type="component" value="Unplaced"/>
</dbReference>
<dbReference type="RNAct" id="P60608">
    <property type="molecule type" value="protein"/>
</dbReference>
<dbReference type="GO" id="GO:0075523">
    <property type="term" value="P:viral translational frameshifting"/>
    <property type="evidence" value="ECO:0007669"/>
    <property type="project" value="UniProtKB-KW"/>
</dbReference>
<dbReference type="CDD" id="cd09851">
    <property type="entry name" value="HTLV-1-like_HR1-HR2"/>
    <property type="match status" value="1"/>
</dbReference>
<dbReference type="Gene3D" id="1.10.287.210">
    <property type="match status" value="1"/>
</dbReference>
<dbReference type="InterPro" id="IPR018154">
    <property type="entry name" value="TLV/ENV_coat_polyprotein"/>
</dbReference>
<dbReference type="PANTHER" id="PTHR10424:SF73">
    <property type="entry name" value="ENDOGENOUS RETROVIRUS GROUP FC1 ENV POLYPROTEIN-RELATED"/>
    <property type="match status" value="1"/>
</dbReference>
<dbReference type="PANTHER" id="PTHR10424">
    <property type="entry name" value="VIRAL ENVELOPE PROTEIN"/>
    <property type="match status" value="1"/>
</dbReference>
<dbReference type="Pfam" id="PF00429">
    <property type="entry name" value="TLV_coat"/>
    <property type="match status" value="1"/>
</dbReference>
<dbReference type="SUPFAM" id="SSF58069">
    <property type="entry name" value="Virus ectodomain"/>
    <property type="match status" value="1"/>
</dbReference>